<accession>Q117R7</accession>
<name>METE_TRIEI</name>
<gene>
    <name evidence="1" type="primary">metE</name>
    <name type="ordered locus">Tery_0847</name>
</gene>
<organism>
    <name type="scientific">Trichodesmium erythraeum (strain IMS101)</name>
    <dbReference type="NCBI Taxonomy" id="203124"/>
    <lineage>
        <taxon>Bacteria</taxon>
        <taxon>Bacillati</taxon>
        <taxon>Cyanobacteriota</taxon>
        <taxon>Cyanophyceae</taxon>
        <taxon>Oscillatoriophycideae</taxon>
        <taxon>Oscillatoriales</taxon>
        <taxon>Microcoleaceae</taxon>
        <taxon>Trichodesmium</taxon>
    </lineage>
</organism>
<protein>
    <recommendedName>
        <fullName evidence="1">5-methyltetrahydropteroyltriglutamate--homocysteine methyltransferase</fullName>
        <ecNumber evidence="1">2.1.1.14</ecNumber>
    </recommendedName>
    <alternativeName>
        <fullName evidence="1">Cobalamin-independent methionine synthase</fullName>
    </alternativeName>
    <alternativeName>
        <fullName evidence="1">Methionine synthase, vitamin-B12 independent isozyme</fullName>
    </alternativeName>
</protein>
<keyword id="KW-0028">Amino-acid biosynthesis</keyword>
<keyword id="KW-0479">Metal-binding</keyword>
<keyword id="KW-0486">Methionine biosynthesis</keyword>
<keyword id="KW-0489">Methyltransferase</keyword>
<keyword id="KW-0677">Repeat</keyword>
<keyword id="KW-0808">Transferase</keyword>
<keyword id="KW-0862">Zinc</keyword>
<dbReference type="EC" id="2.1.1.14" evidence="1"/>
<dbReference type="EMBL" id="CP000393">
    <property type="protein sequence ID" value="ABG50257.1"/>
    <property type="molecule type" value="Genomic_DNA"/>
</dbReference>
<dbReference type="RefSeq" id="WP_011610649.1">
    <property type="nucleotide sequence ID" value="NC_008312.1"/>
</dbReference>
<dbReference type="SMR" id="Q117R7"/>
<dbReference type="STRING" id="203124.Tery_0847"/>
<dbReference type="KEGG" id="ter:Tery_0847"/>
<dbReference type="eggNOG" id="COG0620">
    <property type="taxonomic scope" value="Bacteria"/>
</dbReference>
<dbReference type="HOGENOM" id="CLU_013175_0_0_3"/>
<dbReference type="OrthoDB" id="244285at2"/>
<dbReference type="UniPathway" id="UPA00051">
    <property type="reaction ID" value="UER00082"/>
</dbReference>
<dbReference type="GO" id="GO:0003871">
    <property type="term" value="F:5-methyltetrahydropteroyltriglutamate-homocysteine S-methyltransferase activity"/>
    <property type="evidence" value="ECO:0007669"/>
    <property type="project" value="UniProtKB-UniRule"/>
</dbReference>
<dbReference type="GO" id="GO:0008270">
    <property type="term" value="F:zinc ion binding"/>
    <property type="evidence" value="ECO:0007669"/>
    <property type="project" value="InterPro"/>
</dbReference>
<dbReference type="GO" id="GO:0009086">
    <property type="term" value="P:methionine biosynthetic process"/>
    <property type="evidence" value="ECO:0007669"/>
    <property type="project" value="UniProtKB-UniRule"/>
</dbReference>
<dbReference type="GO" id="GO:0032259">
    <property type="term" value="P:methylation"/>
    <property type="evidence" value="ECO:0007669"/>
    <property type="project" value="UniProtKB-KW"/>
</dbReference>
<dbReference type="CDD" id="cd03311">
    <property type="entry name" value="CIMS_C_terminal_like"/>
    <property type="match status" value="1"/>
</dbReference>
<dbReference type="CDD" id="cd03312">
    <property type="entry name" value="CIMS_N_terminal_like"/>
    <property type="match status" value="1"/>
</dbReference>
<dbReference type="Gene3D" id="3.20.20.210">
    <property type="match status" value="2"/>
</dbReference>
<dbReference type="HAMAP" id="MF_00172">
    <property type="entry name" value="Meth_synth"/>
    <property type="match status" value="1"/>
</dbReference>
<dbReference type="InterPro" id="IPR013215">
    <property type="entry name" value="Cbl-indep_Met_Synth_N"/>
</dbReference>
<dbReference type="InterPro" id="IPR006276">
    <property type="entry name" value="Cobalamin-indep_Met_synthase"/>
</dbReference>
<dbReference type="InterPro" id="IPR002629">
    <property type="entry name" value="Met_Synth_C/arc"/>
</dbReference>
<dbReference type="InterPro" id="IPR038071">
    <property type="entry name" value="UROD/MetE-like_sf"/>
</dbReference>
<dbReference type="NCBIfam" id="TIGR01371">
    <property type="entry name" value="met_syn_B12ind"/>
    <property type="match status" value="1"/>
</dbReference>
<dbReference type="NCBIfam" id="NF003556">
    <property type="entry name" value="PRK05222.1"/>
    <property type="match status" value="1"/>
</dbReference>
<dbReference type="PANTHER" id="PTHR30519">
    <property type="entry name" value="5-METHYLTETRAHYDROPTEROYLTRIGLUTAMATE--HOMOCYSTEINE METHYLTRANSFERASE"/>
    <property type="match status" value="1"/>
</dbReference>
<dbReference type="Pfam" id="PF08267">
    <property type="entry name" value="Meth_synt_1"/>
    <property type="match status" value="1"/>
</dbReference>
<dbReference type="Pfam" id="PF01717">
    <property type="entry name" value="Meth_synt_2"/>
    <property type="match status" value="1"/>
</dbReference>
<dbReference type="PIRSF" id="PIRSF000382">
    <property type="entry name" value="MeTrfase_B12_ind"/>
    <property type="match status" value="1"/>
</dbReference>
<dbReference type="SUPFAM" id="SSF51726">
    <property type="entry name" value="UROD/MetE-like"/>
    <property type="match status" value="2"/>
</dbReference>
<sequence length="744" mass="85147">MSISTSTLGYPRIGKNREVKKALESFWQQKISADELLKIVREIEEASWQTQTKAGIERIGIGDATLYDQILDWSFRFGIIPKRFQQFQNLECYFAMARGKDGILALEMTKWFDTNYHYLVPEITPDITPKADFSDFLETVKRAKKIIGKSAVPIIISPITFIRLSRLESVEFDNILAQLLPLYSDLLTKLKKLGISEIQLHEPALVFGDSSNLKKQFEMAYAELAKVGLNIHLVTYFDDLGETYPWVMKLPVTSISLDLTRGQNLELIKSYGFPADKTLGAGVVDARNIWRIRTQEVTSLLEELKGIIPNISVQPSASLQFVPYDVRREVKLPEALRNVLSFAEQKLEETVLLSKALTGKSNKSEIENIEIYWQEFYKFSPANEKVKSQIKALKETDFRRSMSYLERLDNQIKLPAFPTTTIGSFPQTKQVRKLRARYKKGELTQAEYLAQIDANIAYCIGLQEGMGMDVLVHGEFERSDMVEYFGEQLDGYTFTTHGWVQSYGSRYVRPPIIFGDIYRPHAMTIREFEVAQSLTEKPVKGMLTGPVTMLNWSYPRTDISRQEQAFQLALAIREELKDLEKAGAAFIQVDEPAMREGLPLKQQRWHEYLNWAVDAFRLSTAIARPETQVHTHMCYSEFGDIMESIKQLDADVISIEDSRSNNETLMQLTDADYPAQVGPGVYDVHSPSIPTTEYLRESLYKCIQYLPVTQIWVNPDCGLKTRRWEEAIPATRNMVQAAISLRQE</sequence>
<feature type="chain" id="PRO_1000017290" description="5-methyltetrahydropteroyltriglutamate--homocysteine methyltransferase">
    <location>
        <begin position="1"/>
        <end position="744"/>
    </location>
</feature>
<feature type="active site" description="Proton donor" evidence="1">
    <location>
        <position position="685"/>
    </location>
</feature>
<feature type="binding site" evidence="1">
    <location>
        <begin position="17"/>
        <end position="20"/>
    </location>
    <ligand>
        <name>5-methyltetrahydropteroyltri-L-glutamate</name>
        <dbReference type="ChEBI" id="CHEBI:58207"/>
    </ligand>
</feature>
<feature type="binding site" evidence="1">
    <location>
        <position position="110"/>
    </location>
    <ligand>
        <name>5-methyltetrahydropteroyltri-L-glutamate</name>
        <dbReference type="ChEBI" id="CHEBI:58207"/>
    </ligand>
</feature>
<feature type="binding site" evidence="1">
    <location>
        <begin position="422"/>
        <end position="424"/>
    </location>
    <ligand>
        <name>L-homocysteine</name>
        <dbReference type="ChEBI" id="CHEBI:58199"/>
    </ligand>
</feature>
<feature type="binding site" evidence="1">
    <location>
        <begin position="422"/>
        <end position="424"/>
    </location>
    <ligand>
        <name>L-methionine</name>
        <dbReference type="ChEBI" id="CHEBI:57844"/>
    </ligand>
</feature>
<feature type="binding site" evidence="1">
    <location>
        <position position="475"/>
    </location>
    <ligand>
        <name>L-homocysteine</name>
        <dbReference type="ChEBI" id="CHEBI:58199"/>
    </ligand>
</feature>
<feature type="binding site" evidence="1">
    <location>
        <position position="475"/>
    </location>
    <ligand>
        <name>L-methionine</name>
        <dbReference type="ChEBI" id="CHEBI:57844"/>
    </ligand>
</feature>
<feature type="binding site" evidence="1">
    <location>
        <position position="552"/>
    </location>
    <ligand>
        <name>5-methyltetrahydropteroyltri-L-glutamate</name>
        <dbReference type="ChEBI" id="CHEBI:58207"/>
    </ligand>
</feature>
<feature type="binding site" evidence="1">
    <location>
        <position position="590"/>
    </location>
    <ligand>
        <name>L-homocysteine</name>
        <dbReference type="ChEBI" id="CHEBI:58199"/>
    </ligand>
</feature>
<feature type="binding site" evidence="1">
    <location>
        <position position="590"/>
    </location>
    <ligand>
        <name>L-methionine</name>
        <dbReference type="ChEBI" id="CHEBI:57844"/>
    </ligand>
</feature>
<feature type="binding site" evidence="1">
    <location>
        <position position="596"/>
    </location>
    <ligand>
        <name>5-methyltetrahydropteroyltri-L-glutamate</name>
        <dbReference type="ChEBI" id="CHEBI:58207"/>
    </ligand>
</feature>
<feature type="binding site" evidence="1">
    <location>
        <position position="632"/>
    </location>
    <ligand>
        <name>Zn(2+)</name>
        <dbReference type="ChEBI" id="CHEBI:29105"/>
        <note>catalytic</note>
    </ligand>
</feature>
<feature type="binding site" evidence="1">
    <location>
        <position position="634"/>
    </location>
    <ligand>
        <name>Zn(2+)</name>
        <dbReference type="ChEBI" id="CHEBI:29105"/>
        <note>catalytic</note>
    </ligand>
</feature>
<feature type="binding site" evidence="1">
    <location>
        <position position="656"/>
    </location>
    <ligand>
        <name>Zn(2+)</name>
        <dbReference type="ChEBI" id="CHEBI:29105"/>
        <note>catalytic</note>
    </ligand>
</feature>
<feature type="binding site" evidence="1">
    <location>
        <position position="717"/>
    </location>
    <ligand>
        <name>Zn(2+)</name>
        <dbReference type="ChEBI" id="CHEBI:29105"/>
        <note>catalytic</note>
    </ligand>
</feature>
<evidence type="ECO:0000255" key="1">
    <source>
        <dbReference type="HAMAP-Rule" id="MF_00172"/>
    </source>
</evidence>
<reference key="1">
    <citation type="journal article" date="2015" name="Proc. Natl. Acad. Sci. U.S.A.">
        <title>Trichodesmium genome maintains abundant, widespread noncoding DNA in situ, despite oligotrophic lifestyle.</title>
        <authorList>
            <person name="Walworth N."/>
            <person name="Pfreundt U."/>
            <person name="Nelson W.C."/>
            <person name="Mincer T."/>
            <person name="Heidelberg J.F."/>
            <person name="Fu F."/>
            <person name="Waterbury J.B."/>
            <person name="Glavina del Rio T."/>
            <person name="Goodwin L."/>
            <person name="Kyrpides N.C."/>
            <person name="Land M.L."/>
            <person name="Woyke T."/>
            <person name="Hutchins D.A."/>
            <person name="Hess W.R."/>
            <person name="Webb E.A."/>
        </authorList>
    </citation>
    <scope>NUCLEOTIDE SEQUENCE [LARGE SCALE GENOMIC DNA]</scope>
    <source>
        <strain>IMS101</strain>
    </source>
</reference>
<comment type="function">
    <text evidence="1">Catalyzes the transfer of a methyl group from 5-methyltetrahydrofolate to homocysteine resulting in methionine formation.</text>
</comment>
<comment type="catalytic activity">
    <reaction evidence="1">
        <text>5-methyltetrahydropteroyltri-L-glutamate + L-homocysteine = tetrahydropteroyltri-L-glutamate + L-methionine</text>
        <dbReference type="Rhea" id="RHEA:21196"/>
        <dbReference type="ChEBI" id="CHEBI:57844"/>
        <dbReference type="ChEBI" id="CHEBI:58140"/>
        <dbReference type="ChEBI" id="CHEBI:58199"/>
        <dbReference type="ChEBI" id="CHEBI:58207"/>
        <dbReference type="EC" id="2.1.1.14"/>
    </reaction>
</comment>
<comment type="cofactor">
    <cofactor evidence="1">
        <name>Zn(2+)</name>
        <dbReference type="ChEBI" id="CHEBI:29105"/>
    </cofactor>
    <text evidence="1">Binds 1 zinc ion per subunit.</text>
</comment>
<comment type="pathway">
    <text evidence="1">Amino-acid biosynthesis; L-methionine biosynthesis via de novo pathway; L-methionine from L-homocysteine (MetE route): step 1/1.</text>
</comment>
<comment type="similarity">
    <text evidence="1">Belongs to the vitamin-B12 independent methionine synthase family.</text>
</comment>
<proteinExistence type="inferred from homology"/>